<feature type="chain" id="PRO_0000388419" description="Probable U6 snRNA-associated Sm-like protein LSm2">
    <location>
        <begin position="1"/>
        <end position="94"/>
    </location>
</feature>
<feature type="domain" description="Sm" evidence="2">
    <location>
        <begin position="2"/>
        <end position="74"/>
    </location>
</feature>
<protein>
    <recommendedName>
        <fullName>Probable U6 snRNA-associated Sm-like protein LSm2</fullName>
    </recommendedName>
</protein>
<reference key="1">
    <citation type="journal article" date="2001" name="Nature">
        <title>Genome sequence and gene compaction of the eukaryote parasite Encephalitozoon cuniculi.</title>
        <authorList>
            <person name="Katinka M.D."/>
            <person name="Duprat S."/>
            <person name="Cornillot E."/>
            <person name="Metenier G."/>
            <person name="Thomarat F."/>
            <person name="Prensier G."/>
            <person name="Barbe V."/>
            <person name="Peyretaillade E."/>
            <person name="Brottier P."/>
            <person name="Wincker P."/>
            <person name="Delbac F."/>
            <person name="El Alaoui H."/>
            <person name="Peyret P."/>
            <person name="Saurin W."/>
            <person name="Gouy M."/>
            <person name="Weissenbach J."/>
            <person name="Vivares C.P."/>
        </authorList>
    </citation>
    <scope>NUCLEOTIDE SEQUENCE [LARGE SCALE GENOMIC DNA]</scope>
    <source>
        <strain>GB-M1</strain>
    </source>
</reference>
<comment type="function">
    <text evidence="1">Component of LSm protein complexes, which are involved in RNA processing and may function in a chaperone-like manner. LSM2 binds specifically to the 3'-terminal U-tract of U6 snRNA. Required for processing of pre-tRNAs, pre-rRNAs and U3 snoRNA (By similarity).</text>
</comment>
<comment type="subunit">
    <text evidence="1">LSm subunits form a heteromer with a doughnut shape.</text>
</comment>
<comment type="subcellular location">
    <subcellularLocation>
        <location evidence="1">Nucleus</location>
    </subcellularLocation>
</comment>
<comment type="similarity">
    <text evidence="3">Belongs to the snRNP Sm proteins family.</text>
</comment>
<organism>
    <name type="scientific">Encephalitozoon cuniculi (strain GB-M1)</name>
    <name type="common">Microsporidian parasite</name>
    <dbReference type="NCBI Taxonomy" id="284813"/>
    <lineage>
        <taxon>Eukaryota</taxon>
        <taxon>Fungi</taxon>
        <taxon>Fungi incertae sedis</taxon>
        <taxon>Microsporidia</taxon>
        <taxon>Unikaryonidae</taxon>
        <taxon>Encephalitozoon</taxon>
    </lineage>
</organism>
<name>LSM2_ENCCU</name>
<accession>Q8SQK1</accession>
<proteinExistence type="inferred from homology"/>
<dbReference type="EMBL" id="AL590451">
    <property type="protein sequence ID" value="CAD27153.1"/>
    <property type="molecule type" value="Genomic_DNA"/>
</dbReference>
<dbReference type="RefSeq" id="XP_955734.1">
    <property type="nucleotide sequence ID" value="XM_950641.1"/>
</dbReference>
<dbReference type="SMR" id="Q8SQK1"/>
<dbReference type="FunCoup" id="Q8SQK1">
    <property type="interactions" value="304"/>
</dbReference>
<dbReference type="STRING" id="284813.Q8SQK1"/>
<dbReference type="VEuPathDB" id="MicrosporidiaDB:ECU09_1805"/>
<dbReference type="HOGENOM" id="CLU_130474_4_0_1"/>
<dbReference type="InParanoid" id="Q8SQK1"/>
<dbReference type="OMA" id="DNISCTD"/>
<dbReference type="OrthoDB" id="10256176at2759"/>
<dbReference type="Proteomes" id="UP000000819">
    <property type="component" value="Chromosome IX"/>
</dbReference>
<dbReference type="GO" id="GO:0071013">
    <property type="term" value="C:catalytic step 2 spliceosome"/>
    <property type="evidence" value="ECO:0007669"/>
    <property type="project" value="TreeGrafter"/>
</dbReference>
<dbReference type="GO" id="GO:1990726">
    <property type="term" value="C:Lsm1-7-Pat1 complex"/>
    <property type="evidence" value="ECO:0007669"/>
    <property type="project" value="TreeGrafter"/>
</dbReference>
<dbReference type="GO" id="GO:0000932">
    <property type="term" value="C:P-body"/>
    <property type="evidence" value="ECO:0007669"/>
    <property type="project" value="TreeGrafter"/>
</dbReference>
<dbReference type="GO" id="GO:0071011">
    <property type="term" value="C:precatalytic spliceosome"/>
    <property type="evidence" value="ECO:0007669"/>
    <property type="project" value="TreeGrafter"/>
</dbReference>
<dbReference type="GO" id="GO:0046540">
    <property type="term" value="C:U4/U6 x U5 tri-snRNP complex"/>
    <property type="evidence" value="ECO:0007669"/>
    <property type="project" value="TreeGrafter"/>
</dbReference>
<dbReference type="GO" id="GO:0005688">
    <property type="term" value="C:U6 snRNP"/>
    <property type="evidence" value="ECO:0007669"/>
    <property type="project" value="TreeGrafter"/>
</dbReference>
<dbReference type="GO" id="GO:0003723">
    <property type="term" value="F:RNA binding"/>
    <property type="evidence" value="ECO:0007669"/>
    <property type="project" value="UniProtKB-KW"/>
</dbReference>
<dbReference type="GO" id="GO:0000398">
    <property type="term" value="P:mRNA splicing, via spliceosome"/>
    <property type="evidence" value="ECO:0007669"/>
    <property type="project" value="TreeGrafter"/>
</dbReference>
<dbReference type="Gene3D" id="2.30.30.100">
    <property type="match status" value="1"/>
</dbReference>
<dbReference type="InterPro" id="IPR010920">
    <property type="entry name" value="LSM_dom_sf"/>
</dbReference>
<dbReference type="InterPro" id="IPR047575">
    <property type="entry name" value="Sm"/>
</dbReference>
<dbReference type="InterPro" id="IPR001163">
    <property type="entry name" value="Sm_dom_euk/arc"/>
</dbReference>
<dbReference type="InterPro" id="IPR016654">
    <property type="entry name" value="U6_snRNA_Lsm2"/>
</dbReference>
<dbReference type="PANTHER" id="PTHR13829">
    <property type="entry name" value="SNRNP CORE PROTEIN FAMILY MEMBER"/>
    <property type="match status" value="1"/>
</dbReference>
<dbReference type="PANTHER" id="PTHR13829:SF2">
    <property type="entry name" value="U6 SNRNA-ASSOCIATED SM-LIKE PROTEIN LSM2"/>
    <property type="match status" value="1"/>
</dbReference>
<dbReference type="Pfam" id="PF01423">
    <property type="entry name" value="LSM"/>
    <property type="match status" value="1"/>
</dbReference>
<dbReference type="SMART" id="SM00651">
    <property type="entry name" value="Sm"/>
    <property type="match status" value="1"/>
</dbReference>
<dbReference type="SUPFAM" id="SSF50182">
    <property type="entry name" value="Sm-like ribonucleoproteins"/>
    <property type="match status" value="1"/>
</dbReference>
<dbReference type="PROSITE" id="PS52002">
    <property type="entry name" value="SM"/>
    <property type="match status" value="1"/>
</dbReference>
<sequence>MLFYEFFRSSIGSRVSVMLKAGVYVSGRLGGIDPYLNLSLLDVRILSSHPGLSSISVCSIRGSSIKYILVDKDAKLLQGVNAGSRLRMILDKCY</sequence>
<gene>
    <name type="primary">LSM2</name>
    <name type="ordered locus">ECU09_1805</name>
</gene>
<evidence type="ECO:0000250" key="1"/>
<evidence type="ECO:0000255" key="2">
    <source>
        <dbReference type="PROSITE-ProRule" id="PRU01346"/>
    </source>
</evidence>
<evidence type="ECO:0000305" key="3"/>
<keyword id="KW-0507">mRNA processing</keyword>
<keyword id="KW-0508">mRNA splicing</keyword>
<keyword id="KW-0539">Nucleus</keyword>
<keyword id="KW-1185">Reference proteome</keyword>
<keyword id="KW-0687">Ribonucleoprotein</keyword>
<keyword id="KW-0694">RNA-binding</keyword>
<keyword id="KW-0747">Spliceosome</keyword>